<organism>
    <name type="scientific">Shewanella oneidensis (strain ATCC 700550 / JCM 31522 / CIP 106686 / LMG 19005 / NCIMB 14063 / MR-1)</name>
    <dbReference type="NCBI Taxonomy" id="211586"/>
    <lineage>
        <taxon>Bacteria</taxon>
        <taxon>Pseudomonadati</taxon>
        <taxon>Pseudomonadota</taxon>
        <taxon>Gammaproteobacteria</taxon>
        <taxon>Alteromonadales</taxon>
        <taxon>Shewanellaceae</taxon>
        <taxon>Shewanella</taxon>
    </lineage>
</organism>
<comment type="function">
    <text evidence="1">Condensation of UDP-2,3-diacylglucosamine and 2,3-diacylglucosamine-1-phosphate to form lipid A disaccharide, a precursor of lipid A, a phosphorylated glycolipid that anchors the lipopolysaccharide to the outer membrane of the cell.</text>
</comment>
<comment type="catalytic activity">
    <reaction evidence="1">
        <text>a lipid X + a UDP-2-N,3-O-bis[(3R)-3-hydroxyacyl]-alpha-D-glucosamine = a lipid A disaccharide + UDP + H(+)</text>
        <dbReference type="Rhea" id="RHEA:67828"/>
        <dbReference type="ChEBI" id="CHEBI:15378"/>
        <dbReference type="ChEBI" id="CHEBI:58223"/>
        <dbReference type="ChEBI" id="CHEBI:137748"/>
        <dbReference type="ChEBI" id="CHEBI:176338"/>
        <dbReference type="ChEBI" id="CHEBI:176343"/>
        <dbReference type="EC" id="2.4.1.182"/>
    </reaction>
</comment>
<comment type="pathway">
    <text evidence="1">Bacterial outer membrane biogenesis; LPS lipid A biosynthesis.</text>
</comment>
<comment type="similarity">
    <text evidence="1">Belongs to the LpxB family.</text>
</comment>
<name>LPXB_SHEON</name>
<protein>
    <recommendedName>
        <fullName evidence="1">Lipid-A-disaccharide synthase</fullName>
        <ecNumber evidence="1">2.4.1.182</ecNumber>
    </recommendedName>
</protein>
<gene>
    <name evidence="1" type="primary">lpxB</name>
    <name type="ordered locus">SO_1642</name>
</gene>
<dbReference type="EC" id="2.4.1.182" evidence="1"/>
<dbReference type="EMBL" id="AE014299">
    <property type="protein sequence ID" value="AAN54697.1"/>
    <property type="molecule type" value="Genomic_DNA"/>
</dbReference>
<dbReference type="RefSeq" id="NP_717253.1">
    <property type="nucleotide sequence ID" value="NC_004347.2"/>
</dbReference>
<dbReference type="RefSeq" id="WP_011071797.1">
    <property type="nucleotide sequence ID" value="NC_004347.2"/>
</dbReference>
<dbReference type="SMR" id="Q8EGG2"/>
<dbReference type="STRING" id="211586.SO_1642"/>
<dbReference type="CAZy" id="GT19">
    <property type="family name" value="Glycosyltransferase Family 19"/>
</dbReference>
<dbReference type="PaxDb" id="211586-SO_1642"/>
<dbReference type="KEGG" id="son:SO_1642"/>
<dbReference type="PATRIC" id="fig|211586.12.peg.1581"/>
<dbReference type="eggNOG" id="COG0763">
    <property type="taxonomic scope" value="Bacteria"/>
</dbReference>
<dbReference type="HOGENOM" id="CLU_036577_3_0_6"/>
<dbReference type="OrthoDB" id="9801642at2"/>
<dbReference type="PhylomeDB" id="Q8EGG2"/>
<dbReference type="BioCyc" id="SONE211586:G1GMP-1512-MONOMER"/>
<dbReference type="UniPathway" id="UPA00973"/>
<dbReference type="Proteomes" id="UP000008186">
    <property type="component" value="Chromosome"/>
</dbReference>
<dbReference type="GO" id="GO:0016020">
    <property type="term" value="C:membrane"/>
    <property type="evidence" value="ECO:0007669"/>
    <property type="project" value="GOC"/>
</dbReference>
<dbReference type="GO" id="GO:0008915">
    <property type="term" value="F:lipid-A-disaccharide synthase activity"/>
    <property type="evidence" value="ECO:0007669"/>
    <property type="project" value="UniProtKB-UniRule"/>
</dbReference>
<dbReference type="GO" id="GO:0005543">
    <property type="term" value="F:phospholipid binding"/>
    <property type="evidence" value="ECO:0000318"/>
    <property type="project" value="GO_Central"/>
</dbReference>
<dbReference type="GO" id="GO:0009245">
    <property type="term" value="P:lipid A biosynthetic process"/>
    <property type="evidence" value="ECO:0000318"/>
    <property type="project" value="GO_Central"/>
</dbReference>
<dbReference type="CDD" id="cd01635">
    <property type="entry name" value="Glycosyltransferase_GTB-type"/>
    <property type="match status" value="1"/>
</dbReference>
<dbReference type="HAMAP" id="MF_00392">
    <property type="entry name" value="LpxB"/>
    <property type="match status" value="1"/>
</dbReference>
<dbReference type="InterPro" id="IPR003835">
    <property type="entry name" value="Glyco_trans_19"/>
</dbReference>
<dbReference type="NCBIfam" id="TIGR00215">
    <property type="entry name" value="lpxB"/>
    <property type="match status" value="1"/>
</dbReference>
<dbReference type="PANTHER" id="PTHR30372">
    <property type="entry name" value="LIPID-A-DISACCHARIDE SYNTHASE"/>
    <property type="match status" value="1"/>
</dbReference>
<dbReference type="PANTHER" id="PTHR30372:SF4">
    <property type="entry name" value="LIPID-A-DISACCHARIDE SYNTHASE, MITOCHONDRIAL-RELATED"/>
    <property type="match status" value="1"/>
</dbReference>
<dbReference type="Pfam" id="PF02684">
    <property type="entry name" value="LpxB"/>
    <property type="match status" value="1"/>
</dbReference>
<dbReference type="SUPFAM" id="SSF53756">
    <property type="entry name" value="UDP-Glycosyltransferase/glycogen phosphorylase"/>
    <property type="match status" value="1"/>
</dbReference>
<accession>Q8EGG2</accession>
<keyword id="KW-0328">Glycosyltransferase</keyword>
<keyword id="KW-0441">Lipid A biosynthesis</keyword>
<keyword id="KW-0444">Lipid biosynthesis</keyword>
<keyword id="KW-0443">Lipid metabolism</keyword>
<keyword id="KW-1185">Reference proteome</keyword>
<keyword id="KW-0808">Transferase</keyword>
<feature type="chain" id="PRO_0000190185" description="Lipid-A-disaccharide synthase">
    <location>
        <begin position="1"/>
        <end position="385"/>
    </location>
</feature>
<reference key="1">
    <citation type="journal article" date="2002" name="Nat. Biotechnol.">
        <title>Genome sequence of the dissimilatory metal ion-reducing bacterium Shewanella oneidensis.</title>
        <authorList>
            <person name="Heidelberg J.F."/>
            <person name="Paulsen I.T."/>
            <person name="Nelson K.E."/>
            <person name="Gaidos E.J."/>
            <person name="Nelson W.C."/>
            <person name="Read T.D."/>
            <person name="Eisen J.A."/>
            <person name="Seshadri R."/>
            <person name="Ward N.L."/>
            <person name="Methe B.A."/>
            <person name="Clayton R.A."/>
            <person name="Meyer T."/>
            <person name="Tsapin A."/>
            <person name="Scott J."/>
            <person name="Beanan M.J."/>
            <person name="Brinkac L.M."/>
            <person name="Daugherty S.C."/>
            <person name="DeBoy R.T."/>
            <person name="Dodson R.J."/>
            <person name="Durkin A.S."/>
            <person name="Haft D.H."/>
            <person name="Kolonay J.F."/>
            <person name="Madupu R."/>
            <person name="Peterson J.D."/>
            <person name="Umayam L.A."/>
            <person name="White O."/>
            <person name="Wolf A.M."/>
            <person name="Vamathevan J.J."/>
            <person name="Weidman J.F."/>
            <person name="Impraim M."/>
            <person name="Lee K."/>
            <person name="Berry K.J."/>
            <person name="Lee C."/>
            <person name="Mueller J."/>
            <person name="Khouri H.M."/>
            <person name="Gill J."/>
            <person name="Utterback T.R."/>
            <person name="McDonald L.A."/>
            <person name="Feldblyum T.V."/>
            <person name="Smith H.O."/>
            <person name="Venter J.C."/>
            <person name="Nealson K.H."/>
            <person name="Fraser C.M."/>
        </authorList>
    </citation>
    <scope>NUCLEOTIDE SEQUENCE [LARGE SCALE GENOMIC DNA]</scope>
    <source>
        <strain>ATCC 700550 / JCM 31522 / CIP 106686 / LMG 19005 / NCIMB 14063 / MR-1</strain>
    </source>
</reference>
<evidence type="ECO:0000255" key="1">
    <source>
        <dbReference type="HAMAP-Rule" id="MF_00392"/>
    </source>
</evidence>
<proteinExistence type="inferred from homology"/>
<sequence>MSKKSQLVFAMVAGELSGDILGAGLMAALQKTHPNARFVGIGGPRMEALGFESLFAMEELAVMGIVEVLSRLPRLLHVRASLIKSITELKPDCFIGIDAPDFNIGLELKLKAQGIKTVHYVSPSVWAWRPKRIFKIAKATNMVLSLLPFEKAFYDKHQVPCTFVGHTLADDIPLESDKACARQVLELDQEAEYLAILPGSRGGELKQLAEPFVKAALLIKQQFPDIRFVTPLVNQKRREQFEQALKDHAPDLEIHMVEGKSREVMAAADGILLASGTATLEAMLIKRPMVVAYRVSPLTYSIAKRMMQVNRFSLPNLLAGCDVVPELIQHDCTPEKIAAAVGVELNRDFAPIKAEFERLHQVLRCDASQKAAEAVLALVDFKEVN</sequence>